<name>TBH1_CAEBR</name>
<feature type="signal peptide" evidence="4">
    <location>
        <begin position="1"/>
        <end position="21"/>
    </location>
</feature>
<feature type="chain" id="PRO_0000305214" description="Tyramine beta-hydroxylase">
    <location>
        <begin position="22"/>
        <end position="585"/>
    </location>
</feature>
<feature type="domain" description="DOMON" evidence="5">
    <location>
        <begin position="31"/>
        <end position="142"/>
    </location>
</feature>
<feature type="active site" evidence="4">
    <location>
        <position position="206"/>
    </location>
</feature>
<feature type="active site" evidence="4">
    <location>
        <position position="386"/>
    </location>
</feature>
<feature type="binding site" evidence="1">
    <location>
        <position position="240"/>
    </location>
    <ligand>
        <name>Cu(2+)</name>
        <dbReference type="ChEBI" id="CHEBI:29036"/>
        <label>A</label>
    </ligand>
</feature>
<feature type="binding site" evidence="1">
    <location>
        <position position="241"/>
    </location>
    <ligand>
        <name>Cu(2+)</name>
        <dbReference type="ChEBI" id="CHEBI:29036"/>
        <label>A</label>
    </ligand>
</feature>
<feature type="binding site" evidence="1">
    <location>
        <position position="308"/>
    </location>
    <ligand>
        <name>Cu(2+)</name>
        <dbReference type="ChEBI" id="CHEBI:29036"/>
        <label>A</label>
    </ligand>
</feature>
<feature type="binding site" evidence="1">
    <location>
        <position position="386"/>
    </location>
    <ligand>
        <name>Cu(2+)</name>
        <dbReference type="ChEBI" id="CHEBI:29036"/>
        <label>B</label>
    </ligand>
</feature>
<feature type="binding site" evidence="1">
    <location>
        <position position="388"/>
    </location>
    <ligand>
        <name>Cu(2+)</name>
        <dbReference type="ChEBI" id="CHEBI:29036"/>
        <label>B</label>
    </ligand>
</feature>
<feature type="binding site" evidence="1">
    <location>
        <position position="461"/>
    </location>
    <ligand>
        <name>Cu(2+)</name>
        <dbReference type="ChEBI" id="CHEBI:29036"/>
        <label>B</label>
    </ligand>
</feature>
<feature type="glycosylation site" description="N-linked (GlcNAc...) asparagine" evidence="4">
    <location>
        <position position="32"/>
    </location>
</feature>
<feature type="glycosylation site" description="N-linked (GlcNAc...) asparagine" evidence="4">
    <location>
        <position position="71"/>
    </location>
</feature>
<feature type="glycosylation site" description="N-linked (GlcNAc...) asparagine" evidence="4">
    <location>
        <position position="449"/>
    </location>
</feature>
<feature type="glycosylation site" description="N-linked (GlcNAc...) asparagine" evidence="4">
    <location>
        <position position="483"/>
    </location>
</feature>
<feature type="disulfide bond" evidence="1">
    <location>
        <begin position="208"/>
        <end position="258"/>
    </location>
</feature>
<feature type="disulfide bond" evidence="1">
    <location>
        <begin position="247"/>
        <end position="270"/>
    </location>
</feature>
<feature type="disulfide bond" evidence="1">
    <location>
        <begin position="365"/>
        <end position="477"/>
    </location>
</feature>
<feature type="disulfide bond" evidence="1">
    <location>
        <begin position="369"/>
        <end position="534"/>
    </location>
</feature>
<feature type="disulfide bond" evidence="1">
    <location>
        <begin position="440"/>
        <end position="462"/>
    </location>
</feature>
<keyword id="KW-0186">Copper</keyword>
<keyword id="KW-0968">Cytoplasmic vesicle</keyword>
<keyword id="KW-1015">Disulfide bond</keyword>
<keyword id="KW-0325">Glycoprotein</keyword>
<keyword id="KW-0479">Metal-binding</keyword>
<keyword id="KW-0503">Monooxygenase</keyword>
<keyword id="KW-0530">Neurotransmitter biosynthesis</keyword>
<keyword id="KW-0560">Oxidoreductase</keyword>
<keyword id="KW-1185">Reference proteome</keyword>
<keyword id="KW-0732">Signal</keyword>
<keyword id="KW-0770">Synapse</keyword>
<organism>
    <name type="scientific">Caenorhabditis briggsae</name>
    <dbReference type="NCBI Taxonomy" id="6238"/>
    <lineage>
        <taxon>Eukaryota</taxon>
        <taxon>Metazoa</taxon>
        <taxon>Ecdysozoa</taxon>
        <taxon>Nematoda</taxon>
        <taxon>Chromadorea</taxon>
        <taxon>Rhabditida</taxon>
        <taxon>Rhabditina</taxon>
        <taxon>Rhabditomorpha</taxon>
        <taxon>Rhabditoidea</taxon>
        <taxon>Rhabditidae</taxon>
        <taxon>Peloderinae</taxon>
        <taxon>Caenorhabditis</taxon>
    </lineage>
</organism>
<sequence length="585" mass="67137">MKCANAAALLFFVLCDIGVHGGEIVAELLHSNVTVKWQTDYERQTVDFSIWFGAKTPDLLFLGFSDFGDMNSSDVLMYDNVKREIMDSYTNRDYKIIPDLSQDFQQLRRRKDHFVVRRKLTTCDSRDYAFQRGTTQFYIAASFGYRNLVDIRDKKWILDKKFGKVIEGPTDQPSTDEGVSSLERDVQLVIVNSNSPDPVPNVETTYECIIRKMPFDTVHKTYHIVRMEPYITPGNEHLVHHMEVFLCRDEVEEWSGNCNDPKKPKKSKSCSHVIAAWAMGEGPIHYPREAGLPIGGKGKNEYVMVEIHYNNPELHKGVMDTSGFQFYVTGLLRIYDAGIMELGLIYSDANSVPPNQKAWAMNGYCPSQCTQNLPEEGINIFASQMHAHLTGRKLWTSQYRDGVQIGDVNRDEHYSPHWQHLQQLRPMVRVMPGDTLVTTCVYDTRRRSNVTFGGYGITDEMCVNYIYYYPASEVEVCKSAISNSTLRAYFSQRHGMDGKTMKISDMYNGVKDWSNGVDEEFYNVLNVGNVNMNCLKSNGESFEFKSKDPRQGWENMARPRLFSGSFIRTRDRFQCPAINDMINFE</sequence>
<reference key="1">
    <citation type="journal article" date="2003" name="PLoS Biol.">
        <title>The genome sequence of Caenorhabditis briggsae: a platform for comparative genomics.</title>
        <authorList>
            <person name="Stein L.D."/>
            <person name="Bao Z."/>
            <person name="Blasiar D."/>
            <person name="Blumenthal T."/>
            <person name="Brent M.R."/>
            <person name="Chen N."/>
            <person name="Chinwalla A."/>
            <person name="Clarke L."/>
            <person name="Clee C."/>
            <person name="Coghlan A."/>
            <person name="Coulson A."/>
            <person name="D'Eustachio P."/>
            <person name="Fitch D.H.A."/>
            <person name="Fulton L.A."/>
            <person name="Fulton R.E."/>
            <person name="Griffiths-Jones S."/>
            <person name="Harris T.W."/>
            <person name="Hillier L.W."/>
            <person name="Kamath R."/>
            <person name="Kuwabara P.E."/>
            <person name="Mardis E.R."/>
            <person name="Marra M.A."/>
            <person name="Miner T.L."/>
            <person name="Minx P."/>
            <person name="Mullikin J.C."/>
            <person name="Plumb R.W."/>
            <person name="Rogers J."/>
            <person name="Schein J.E."/>
            <person name="Sohrmann M."/>
            <person name="Spieth J."/>
            <person name="Stajich J.E."/>
            <person name="Wei C."/>
            <person name="Willey D."/>
            <person name="Wilson R.K."/>
            <person name="Durbin R.M."/>
            <person name="Waterston R.H."/>
        </authorList>
    </citation>
    <scope>NUCLEOTIDE SEQUENCE [LARGE SCALE GENOMIC DNA]</scope>
    <source>
        <strain>AF16</strain>
    </source>
</reference>
<gene>
    <name type="primary">tbh-1</name>
    <name type="ORF">CBG07714</name>
</gene>
<dbReference type="EC" id="1.14.17.-" evidence="2"/>
<dbReference type="EMBL" id="HE601041">
    <property type="protein sequence ID" value="CAP27443.1"/>
    <property type="molecule type" value="Genomic_DNA"/>
</dbReference>
<dbReference type="SMR" id="Q61P40"/>
<dbReference type="FunCoup" id="Q61P40">
    <property type="interactions" value="42"/>
</dbReference>
<dbReference type="STRING" id="6238.Q61P40"/>
<dbReference type="GlyCosmos" id="Q61P40">
    <property type="glycosylation" value="4 sites, No reported glycans"/>
</dbReference>
<dbReference type="EnsemblMetazoa" id="CBG07714.1">
    <property type="protein sequence ID" value="CBG07714.1"/>
    <property type="gene ID" value="WBGene00029677"/>
</dbReference>
<dbReference type="KEGG" id="cbr:CBG_07714"/>
<dbReference type="CTD" id="8587946"/>
<dbReference type="WormBase" id="CBG07714">
    <property type="protein sequence ID" value="CBP16058"/>
    <property type="gene ID" value="WBGene00029677"/>
    <property type="gene designation" value="Cbr-tbh-1"/>
</dbReference>
<dbReference type="eggNOG" id="KOG3568">
    <property type="taxonomic scope" value="Eukaryota"/>
</dbReference>
<dbReference type="HOGENOM" id="CLU_017939_3_0_1"/>
<dbReference type="InParanoid" id="Q61P40"/>
<dbReference type="OMA" id="FPHFSGP"/>
<dbReference type="Proteomes" id="UP000008549">
    <property type="component" value="Unassembled WGS sequence"/>
</dbReference>
<dbReference type="GO" id="GO:0005615">
    <property type="term" value="C:extracellular space"/>
    <property type="evidence" value="ECO:0000318"/>
    <property type="project" value="GO_Central"/>
</dbReference>
<dbReference type="GO" id="GO:0030667">
    <property type="term" value="C:secretory granule membrane"/>
    <property type="evidence" value="ECO:0000318"/>
    <property type="project" value="GO_Central"/>
</dbReference>
<dbReference type="GO" id="GO:0008021">
    <property type="term" value="C:synaptic vesicle"/>
    <property type="evidence" value="ECO:0007669"/>
    <property type="project" value="UniProtKB-SubCell"/>
</dbReference>
<dbReference type="GO" id="GO:0005507">
    <property type="term" value="F:copper ion binding"/>
    <property type="evidence" value="ECO:0000318"/>
    <property type="project" value="GO_Central"/>
</dbReference>
<dbReference type="GO" id="GO:0004500">
    <property type="term" value="F:dopamine beta-monooxygenase activity"/>
    <property type="evidence" value="ECO:0000318"/>
    <property type="project" value="GO_Central"/>
</dbReference>
<dbReference type="GO" id="GO:0004836">
    <property type="term" value="F:tyramine-beta hydroxylase activity"/>
    <property type="evidence" value="ECO:0007669"/>
    <property type="project" value="EnsemblMetazoa"/>
</dbReference>
<dbReference type="GO" id="GO:0042420">
    <property type="term" value="P:dopamine catabolic process"/>
    <property type="evidence" value="ECO:0000318"/>
    <property type="project" value="GO_Central"/>
</dbReference>
<dbReference type="GO" id="GO:0042421">
    <property type="term" value="P:norepinephrine biosynthetic process"/>
    <property type="evidence" value="ECO:0000318"/>
    <property type="project" value="GO_Central"/>
</dbReference>
<dbReference type="GO" id="GO:0006589">
    <property type="term" value="P:octopamine biosynthetic process"/>
    <property type="evidence" value="ECO:0000318"/>
    <property type="project" value="GO_Central"/>
</dbReference>
<dbReference type="CDD" id="cd09631">
    <property type="entry name" value="DOMON_DOH"/>
    <property type="match status" value="1"/>
</dbReference>
<dbReference type="FunFam" id="2.60.120.310:FF:000004">
    <property type="entry name" value="DBH-like monooxygenase protein 1"/>
    <property type="match status" value="1"/>
</dbReference>
<dbReference type="FunFam" id="2.60.120.230:FF:000001">
    <property type="entry name" value="Monooxygenase, DBH-like 1"/>
    <property type="match status" value="1"/>
</dbReference>
<dbReference type="Gene3D" id="2.60.120.230">
    <property type="match status" value="1"/>
</dbReference>
<dbReference type="Gene3D" id="2.60.120.310">
    <property type="entry name" value="Copper type II, ascorbate-dependent monooxygenase, N-terminal domain"/>
    <property type="match status" value="1"/>
</dbReference>
<dbReference type="InterPro" id="IPR014784">
    <property type="entry name" value="Cu2_ascorb_mOase-like_C"/>
</dbReference>
<dbReference type="InterPro" id="IPR020611">
    <property type="entry name" value="Cu2_ascorb_mOase_CS-1"/>
</dbReference>
<dbReference type="InterPro" id="IPR000323">
    <property type="entry name" value="Cu2_ascorb_mOase_N"/>
</dbReference>
<dbReference type="InterPro" id="IPR036939">
    <property type="entry name" value="Cu2_ascorb_mOase_N_sf"/>
</dbReference>
<dbReference type="InterPro" id="IPR024548">
    <property type="entry name" value="Cu2_monoox_C"/>
</dbReference>
<dbReference type="InterPro" id="IPR000945">
    <property type="entry name" value="DBH-like"/>
</dbReference>
<dbReference type="InterPro" id="IPR045266">
    <property type="entry name" value="DOH_DOMON"/>
</dbReference>
<dbReference type="InterPro" id="IPR005018">
    <property type="entry name" value="DOMON_domain"/>
</dbReference>
<dbReference type="InterPro" id="IPR008977">
    <property type="entry name" value="PHM/PNGase_F_dom_sf"/>
</dbReference>
<dbReference type="InterPro" id="IPR028460">
    <property type="entry name" value="Tbh/DBH"/>
</dbReference>
<dbReference type="PANTHER" id="PTHR10157">
    <property type="entry name" value="DOPAMINE BETA HYDROXYLASE RELATED"/>
    <property type="match status" value="1"/>
</dbReference>
<dbReference type="PANTHER" id="PTHR10157:SF23">
    <property type="entry name" value="MOXD1 HOMOLOG 1"/>
    <property type="match status" value="1"/>
</dbReference>
<dbReference type="Pfam" id="PF03712">
    <property type="entry name" value="Cu2_monoox_C"/>
    <property type="match status" value="1"/>
</dbReference>
<dbReference type="Pfam" id="PF01082">
    <property type="entry name" value="Cu2_monooxygen"/>
    <property type="match status" value="1"/>
</dbReference>
<dbReference type="Pfam" id="PF03351">
    <property type="entry name" value="DOMON"/>
    <property type="match status" value="1"/>
</dbReference>
<dbReference type="PRINTS" id="PR00767">
    <property type="entry name" value="DBMONOXGNASE"/>
</dbReference>
<dbReference type="SUPFAM" id="SSF49742">
    <property type="entry name" value="PHM/PNGase F"/>
    <property type="match status" value="2"/>
</dbReference>
<dbReference type="PROSITE" id="PS00084">
    <property type="entry name" value="CU2_MONOOXYGENASE_1"/>
    <property type="match status" value="1"/>
</dbReference>
<dbReference type="PROSITE" id="PS50836">
    <property type="entry name" value="DOMON"/>
    <property type="match status" value="1"/>
</dbReference>
<accession>Q61P40</accession>
<accession>A8X483</accession>
<protein>
    <recommendedName>
        <fullName>Tyramine beta-hydroxylase</fullName>
        <ecNumber evidence="2">1.14.17.-</ecNumber>
    </recommendedName>
    <alternativeName>
        <fullName>Tyramine beta-monooxygenase</fullName>
        <shortName>TbetaM</shortName>
    </alternativeName>
</protein>
<proteinExistence type="inferred from homology"/>
<comment type="function">
    <text evidence="2 3">Catalyzes the hydroxylation of tyramine into octopamine, a neurotransmitter involved in pharyngeal pumping and egg laying.</text>
</comment>
<comment type="catalytic activity">
    <reaction evidence="2">
        <text>tyramine + L-ascorbate + O2 = (R)-octopamine + L-dehydroascorbate + H2O</text>
        <dbReference type="Rhea" id="RHEA:57132"/>
        <dbReference type="ChEBI" id="CHEBI:15377"/>
        <dbReference type="ChEBI" id="CHEBI:15379"/>
        <dbReference type="ChEBI" id="CHEBI:38290"/>
        <dbReference type="ChEBI" id="CHEBI:58539"/>
        <dbReference type="ChEBI" id="CHEBI:141486"/>
        <dbReference type="ChEBI" id="CHEBI:327995"/>
    </reaction>
    <physiologicalReaction direction="left-to-right" evidence="2">
        <dbReference type="Rhea" id="RHEA:57133"/>
    </physiologicalReaction>
</comment>
<comment type="cofactor">
    <cofactor evidence="2">
        <name>Cu(2+)</name>
        <dbReference type="ChEBI" id="CHEBI:29036"/>
    </cofactor>
    <text evidence="2">Binds 2 copper ions per subunit.</text>
</comment>
<comment type="subcellular location">
    <subcellularLocation>
        <location evidence="3">Cytoplasmic vesicle</location>
        <location evidence="3">Secretory vesicle</location>
        <location evidence="3">Synaptic vesicle</location>
    </subcellularLocation>
</comment>
<comment type="similarity">
    <text evidence="6">Belongs to the copper type II ascorbate-dependent monooxygenase family.</text>
</comment>
<evidence type="ECO:0000250" key="1">
    <source>
        <dbReference type="UniProtKB" id="P09172"/>
    </source>
</evidence>
<evidence type="ECO:0000250" key="2">
    <source>
        <dbReference type="UniProtKB" id="Q86B61"/>
    </source>
</evidence>
<evidence type="ECO:0000250" key="3">
    <source>
        <dbReference type="UniProtKB" id="Q9XTQ6"/>
    </source>
</evidence>
<evidence type="ECO:0000255" key="4"/>
<evidence type="ECO:0000255" key="5">
    <source>
        <dbReference type="PROSITE-ProRule" id="PRU00246"/>
    </source>
</evidence>
<evidence type="ECO:0000305" key="6"/>